<protein>
    <recommendedName>
        <fullName>Brevinin-2DYe</fullName>
    </recommendedName>
    <alternativeName>
        <fullName>Brevinin-2CDYa</fullName>
    </alternativeName>
</protein>
<comment type="function">
    <text evidence="2">Antimicrobial peptide. Active against the Gram-positive bacterium S.aureus (MIC=15 uM) and the Gram-negative bacterium E.coli (MIC=30 uM).</text>
</comment>
<comment type="subcellular location">
    <subcellularLocation>
        <location evidence="3">Secreted</location>
    </subcellularLocation>
</comment>
<comment type="tissue specificity">
    <text evidence="3">Expressed by the skin glands.</text>
</comment>
<comment type="mass spectrometry" mass="3671.7" method="MALDI" evidence="2"/>
<comment type="similarity">
    <text evidence="4">Belongs to the frog skin active peptide (FSAP) family. Brevinin subfamily.</text>
</comment>
<proteinExistence type="evidence at protein level"/>
<keyword id="KW-0878">Amphibian defense peptide</keyword>
<keyword id="KW-0044">Antibiotic</keyword>
<keyword id="KW-0929">Antimicrobial</keyword>
<keyword id="KW-0903">Direct protein sequencing</keyword>
<keyword id="KW-1015">Disulfide bond</keyword>
<keyword id="KW-0964">Secreted</keyword>
<sequence length="37" mass="3675">GLFSVVTGVLKAVGKNVAKNVGGSLLEQLKCKISGGC</sequence>
<accession>P0C5X5</accession>
<organism>
    <name type="scientific">Rana dybowskii</name>
    <name type="common">Dybovsky's frog</name>
    <name type="synonym">Korean brown frog</name>
    <dbReference type="NCBI Taxonomy" id="71582"/>
    <lineage>
        <taxon>Eukaryota</taxon>
        <taxon>Metazoa</taxon>
        <taxon>Chordata</taxon>
        <taxon>Craniata</taxon>
        <taxon>Vertebrata</taxon>
        <taxon>Euteleostomi</taxon>
        <taxon>Amphibia</taxon>
        <taxon>Batrachia</taxon>
        <taxon>Anura</taxon>
        <taxon>Neobatrachia</taxon>
        <taxon>Ranoidea</taxon>
        <taxon>Ranidae</taxon>
        <taxon>Rana</taxon>
        <taxon>Rana</taxon>
    </lineage>
</organism>
<evidence type="ECO:0000250" key="1"/>
<evidence type="ECO:0000269" key="2">
    <source>
    </source>
</evidence>
<evidence type="ECO:0000269" key="3">
    <source>
    </source>
</evidence>
<evidence type="ECO:0000305" key="4"/>
<dbReference type="SMR" id="P0C5X5"/>
<dbReference type="GO" id="GO:0005576">
    <property type="term" value="C:extracellular region"/>
    <property type="evidence" value="ECO:0007669"/>
    <property type="project" value="UniProtKB-SubCell"/>
</dbReference>
<dbReference type="GO" id="GO:0042742">
    <property type="term" value="P:defense response to bacterium"/>
    <property type="evidence" value="ECO:0007669"/>
    <property type="project" value="UniProtKB-KW"/>
</dbReference>
<dbReference type="InterPro" id="IPR012521">
    <property type="entry name" value="Antimicrobial_frog_2"/>
</dbReference>
<dbReference type="Pfam" id="PF08023">
    <property type="entry name" value="Antimicrobial_2"/>
    <property type="match status" value="1"/>
</dbReference>
<feature type="peptide" id="PRO_0000311603" description="Brevinin-2DYe">
    <location>
        <begin position="1"/>
        <end position="37"/>
    </location>
</feature>
<feature type="disulfide bond" evidence="1">
    <location>
        <begin position="31"/>
        <end position="37"/>
    </location>
</feature>
<reference key="1">
    <citation type="journal article" date="2007" name="Toxicon">
        <title>Cytolytic peptides belonging to the brevinin-1 and brevinin-2 families isolated from the skin of the Japanese brown frog, Rana dybowskii.</title>
        <authorList>
            <person name="Conlon J.M."/>
            <person name="Kolodziejek J."/>
            <person name="Nowotny N."/>
            <person name="Leprince J."/>
            <person name="Vaudry H."/>
            <person name="Coquet L."/>
            <person name="Jouenne T."/>
            <person name="Iwamuro S."/>
        </authorList>
    </citation>
    <scope>PROTEIN SEQUENCE</scope>
    <scope>FUNCTION</scope>
    <scope>MASS SPECTROMETRY</scope>
    <source>
        <tissue>Skin secretion</tissue>
    </source>
</reference>
<reference key="2">
    <citation type="journal article" date="2009" name="Comp. Biochem. Physiol.">
        <title>Characterization of antimicrobial peptides isolated from the skin of the Chinese frog, Rana dybowskii.</title>
        <authorList>
            <person name="Jin L.-L."/>
            <person name="Li Q."/>
            <person name="Song S.-S."/>
            <person name="Feng K."/>
            <person name="Zhang D.-B."/>
            <person name="Wang Q.-Y."/>
            <person name="Chen Y.-H."/>
        </authorList>
    </citation>
    <scope>PROTEIN SEQUENCE</scope>
    <scope>SUBCELLULAR LOCATION</scope>
    <scope>TISSUE SPECIFICITY</scope>
    <source>
        <tissue>Skin secretion</tissue>
    </source>
</reference>
<name>BR2E_RANDY</name>